<name>GLMS_METMA</name>
<dbReference type="EC" id="2.6.1.16" evidence="1"/>
<dbReference type="EMBL" id="AE008384">
    <property type="protein sequence ID" value="AAM29996.1"/>
    <property type="molecule type" value="Genomic_DNA"/>
</dbReference>
<dbReference type="RefSeq" id="WP_011032254.1">
    <property type="nucleotide sequence ID" value="NC_003901.1"/>
</dbReference>
<dbReference type="SMR" id="Q8Q038"/>
<dbReference type="GeneID" id="66134969"/>
<dbReference type="KEGG" id="mma:MM_0300"/>
<dbReference type="PATRIC" id="fig|192952.21.peg.368"/>
<dbReference type="eggNOG" id="arCOG00057">
    <property type="taxonomic scope" value="Archaea"/>
</dbReference>
<dbReference type="HOGENOM" id="CLU_012520_5_2_2"/>
<dbReference type="Proteomes" id="UP000000595">
    <property type="component" value="Chromosome"/>
</dbReference>
<dbReference type="GO" id="GO:0005737">
    <property type="term" value="C:cytoplasm"/>
    <property type="evidence" value="ECO:0007669"/>
    <property type="project" value="UniProtKB-SubCell"/>
</dbReference>
<dbReference type="GO" id="GO:0097367">
    <property type="term" value="F:carbohydrate derivative binding"/>
    <property type="evidence" value="ECO:0007669"/>
    <property type="project" value="InterPro"/>
</dbReference>
<dbReference type="GO" id="GO:0004360">
    <property type="term" value="F:glutamine-fructose-6-phosphate transaminase (isomerizing) activity"/>
    <property type="evidence" value="ECO:0007669"/>
    <property type="project" value="UniProtKB-UniRule"/>
</dbReference>
<dbReference type="GO" id="GO:0005975">
    <property type="term" value="P:carbohydrate metabolic process"/>
    <property type="evidence" value="ECO:0007669"/>
    <property type="project" value="UniProtKB-UniRule"/>
</dbReference>
<dbReference type="GO" id="GO:0006002">
    <property type="term" value="P:fructose 6-phosphate metabolic process"/>
    <property type="evidence" value="ECO:0007669"/>
    <property type="project" value="TreeGrafter"/>
</dbReference>
<dbReference type="GO" id="GO:0006487">
    <property type="term" value="P:protein N-linked glycosylation"/>
    <property type="evidence" value="ECO:0007669"/>
    <property type="project" value="TreeGrafter"/>
</dbReference>
<dbReference type="GO" id="GO:0006047">
    <property type="term" value="P:UDP-N-acetylglucosamine metabolic process"/>
    <property type="evidence" value="ECO:0007669"/>
    <property type="project" value="TreeGrafter"/>
</dbReference>
<dbReference type="CDD" id="cd00714">
    <property type="entry name" value="GFAT"/>
    <property type="match status" value="1"/>
</dbReference>
<dbReference type="CDD" id="cd05008">
    <property type="entry name" value="SIS_GlmS_GlmD_1"/>
    <property type="match status" value="1"/>
</dbReference>
<dbReference type="CDD" id="cd05009">
    <property type="entry name" value="SIS_GlmS_GlmD_2"/>
    <property type="match status" value="1"/>
</dbReference>
<dbReference type="FunFam" id="3.40.50.10490:FF:000001">
    <property type="entry name" value="Glutamine--fructose-6-phosphate aminotransferase [isomerizing]"/>
    <property type="match status" value="1"/>
</dbReference>
<dbReference type="FunFam" id="3.40.50.10490:FF:000022">
    <property type="entry name" value="Glutamine--fructose-6-phosphate aminotransferase [isomerizing]"/>
    <property type="match status" value="1"/>
</dbReference>
<dbReference type="FunFam" id="3.60.20.10:FF:000006">
    <property type="entry name" value="Glutamine--fructose-6-phosphate aminotransferase [isomerizing]"/>
    <property type="match status" value="1"/>
</dbReference>
<dbReference type="Gene3D" id="3.40.50.10490">
    <property type="entry name" value="Glucose-6-phosphate isomerase like protein, domain 1"/>
    <property type="match status" value="2"/>
</dbReference>
<dbReference type="Gene3D" id="3.60.20.10">
    <property type="entry name" value="Glutamine Phosphoribosylpyrophosphate, subunit 1, domain 1"/>
    <property type="match status" value="1"/>
</dbReference>
<dbReference type="HAMAP" id="MF_00164">
    <property type="entry name" value="GlmS"/>
    <property type="match status" value="1"/>
</dbReference>
<dbReference type="InterPro" id="IPR017932">
    <property type="entry name" value="GATase_2_dom"/>
</dbReference>
<dbReference type="InterPro" id="IPR005855">
    <property type="entry name" value="GFAT"/>
</dbReference>
<dbReference type="InterPro" id="IPR047084">
    <property type="entry name" value="GFAT_N"/>
</dbReference>
<dbReference type="InterPro" id="IPR035466">
    <property type="entry name" value="GlmS/AgaS_SIS"/>
</dbReference>
<dbReference type="InterPro" id="IPR035490">
    <property type="entry name" value="GlmS/FrlB_SIS"/>
</dbReference>
<dbReference type="InterPro" id="IPR029055">
    <property type="entry name" value="Ntn_hydrolases_N"/>
</dbReference>
<dbReference type="InterPro" id="IPR001347">
    <property type="entry name" value="SIS_dom"/>
</dbReference>
<dbReference type="InterPro" id="IPR046348">
    <property type="entry name" value="SIS_dom_sf"/>
</dbReference>
<dbReference type="NCBIfam" id="TIGR01135">
    <property type="entry name" value="glmS"/>
    <property type="match status" value="1"/>
</dbReference>
<dbReference type="NCBIfam" id="NF001484">
    <property type="entry name" value="PRK00331.1"/>
    <property type="match status" value="1"/>
</dbReference>
<dbReference type="PANTHER" id="PTHR10937">
    <property type="entry name" value="GLUCOSAMINE--FRUCTOSE-6-PHOSPHATE AMINOTRANSFERASE, ISOMERIZING"/>
    <property type="match status" value="1"/>
</dbReference>
<dbReference type="PANTHER" id="PTHR10937:SF0">
    <property type="entry name" value="GLUTAMINE--FRUCTOSE-6-PHOSPHATE TRANSAMINASE (ISOMERIZING)"/>
    <property type="match status" value="1"/>
</dbReference>
<dbReference type="Pfam" id="PF13522">
    <property type="entry name" value="GATase_6"/>
    <property type="match status" value="1"/>
</dbReference>
<dbReference type="Pfam" id="PF01380">
    <property type="entry name" value="SIS"/>
    <property type="match status" value="2"/>
</dbReference>
<dbReference type="SUPFAM" id="SSF56235">
    <property type="entry name" value="N-terminal nucleophile aminohydrolases (Ntn hydrolases)"/>
    <property type="match status" value="1"/>
</dbReference>
<dbReference type="SUPFAM" id="SSF53697">
    <property type="entry name" value="SIS domain"/>
    <property type="match status" value="1"/>
</dbReference>
<dbReference type="PROSITE" id="PS51278">
    <property type="entry name" value="GATASE_TYPE_2"/>
    <property type="match status" value="1"/>
</dbReference>
<dbReference type="PROSITE" id="PS51464">
    <property type="entry name" value="SIS"/>
    <property type="match status" value="2"/>
</dbReference>
<feature type="initiator methionine" description="Removed" evidence="1">
    <location>
        <position position="1"/>
    </location>
</feature>
<feature type="chain" id="PRO_0000135426" description="Glutamine--fructose-6-phosphate aminotransferase [isomerizing]">
    <location>
        <begin position="2"/>
        <end position="618"/>
    </location>
</feature>
<feature type="domain" description="Glutamine amidotransferase type-2" evidence="1">
    <location>
        <begin position="2"/>
        <end position="226"/>
    </location>
</feature>
<feature type="domain" description="SIS 1" evidence="1">
    <location>
        <begin position="295"/>
        <end position="434"/>
    </location>
</feature>
<feature type="domain" description="SIS 2" evidence="1">
    <location>
        <begin position="467"/>
        <end position="608"/>
    </location>
</feature>
<feature type="region of interest" description="Disordered" evidence="2">
    <location>
        <begin position="72"/>
        <end position="91"/>
    </location>
</feature>
<feature type="active site" description="Nucleophile; for GATase activity" evidence="1">
    <location>
        <position position="2"/>
    </location>
</feature>
<feature type="active site" description="For Fru-6P isomerization activity" evidence="1">
    <location>
        <position position="613"/>
    </location>
</feature>
<protein>
    <recommendedName>
        <fullName evidence="1">Glutamine--fructose-6-phosphate aminotransferase [isomerizing]</fullName>
        <ecNumber evidence="1">2.6.1.16</ecNumber>
    </recommendedName>
    <alternativeName>
        <fullName evidence="1">D-fructose-6-phosphate amidotransferase</fullName>
    </alternativeName>
    <alternativeName>
        <fullName evidence="1">GFAT</fullName>
    </alternativeName>
    <alternativeName>
        <fullName evidence="1">Glucosamine-6-phosphate synthase</fullName>
    </alternativeName>
    <alternativeName>
        <fullName evidence="1">Hexosephosphate aminotransferase</fullName>
    </alternativeName>
    <alternativeName>
        <fullName evidence="1">L-glutamine--D-fructose-6-phosphate amidotransferase</fullName>
    </alternativeName>
</protein>
<organism>
    <name type="scientific">Methanosarcina mazei (strain ATCC BAA-159 / DSM 3647 / Goe1 / Go1 / JCM 11833 / OCM 88)</name>
    <name type="common">Methanosarcina frisia</name>
    <dbReference type="NCBI Taxonomy" id="192952"/>
    <lineage>
        <taxon>Archaea</taxon>
        <taxon>Methanobacteriati</taxon>
        <taxon>Methanobacteriota</taxon>
        <taxon>Stenosarchaea group</taxon>
        <taxon>Methanomicrobia</taxon>
        <taxon>Methanosarcinales</taxon>
        <taxon>Methanosarcinaceae</taxon>
        <taxon>Methanosarcina</taxon>
    </lineage>
</organism>
<evidence type="ECO:0000255" key="1">
    <source>
        <dbReference type="HAMAP-Rule" id="MF_00164"/>
    </source>
</evidence>
<evidence type="ECO:0000256" key="2">
    <source>
        <dbReference type="SAM" id="MobiDB-lite"/>
    </source>
</evidence>
<keyword id="KW-0032">Aminotransferase</keyword>
<keyword id="KW-0963">Cytoplasm</keyword>
<keyword id="KW-0315">Glutamine amidotransferase</keyword>
<keyword id="KW-0677">Repeat</keyword>
<keyword id="KW-0808">Transferase</keyword>
<sequence>MCGIVGYAGRNAAAPVIIESLKKLEYRGYDSAGVTVLGSGVETYKAVGKIINLESEIPKNLKGAIGIGHTRWATHGRPSTENAHPHNSGGNPVKISLVHNGIIENYMALKERLIGEGYEFKSETDTEVIAHLLHKHIYGSPDGKEARNNLLAGLREALKEIEGSYALAVISADEQGKLVLARKDSPLVIGLGKGENFAASDVTAFLIHTRDVIFVDDFETAVLTPDSVEIFDREGKLKEKKIEKIEWDFEAAEKAGYEHFMLKEIHEQVSAIHNTLAGKVSELEGAIYLKELNLNDDEIKKLSRVQILACGTSWHAGLLGKYLFEQLAGIHCDIDICSEYRYRNPVMHEGTLAIAITQSGETADTLAAVREIMSYNCPTLAITNVVGSTITREANSVLYTRAGPEIGVAATKTFSTQLILLYLLAVKFALVRGKLSPDYVKSFITEIRKVPGEIQQILNQKEVIRECAENFACSKSYFFLGRHLSYPIALEGALKLKEISYVHAEGFAAGELKHGPIALLDEGAPVVAIATKGQTYEKMLSNIKEVKARDAYVIAVANINDTEIGKYADVVLRVPSCDELLAPLLSVVVLQLLAYYTALARDCAIDKPRNLAKSVTVE</sequence>
<gene>
    <name evidence="1" type="primary">glmS</name>
    <name type="ordered locus">MM_0300</name>
</gene>
<reference key="1">
    <citation type="journal article" date="2002" name="J. Mol. Microbiol. Biotechnol.">
        <title>The genome of Methanosarcina mazei: evidence for lateral gene transfer between Bacteria and Archaea.</title>
        <authorList>
            <person name="Deppenmeier U."/>
            <person name="Johann A."/>
            <person name="Hartsch T."/>
            <person name="Merkl R."/>
            <person name="Schmitz R.A."/>
            <person name="Martinez-Arias R."/>
            <person name="Henne A."/>
            <person name="Wiezer A."/>
            <person name="Baeumer S."/>
            <person name="Jacobi C."/>
            <person name="Brueggemann H."/>
            <person name="Lienard T."/>
            <person name="Christmann A."/>
            <person name="Boemecke M."/>
            <person name="Steckel S."/>
            <person name="Bhattacharyya A."/>
            <person name="Lykidis A."/>
            <person name="Overbeek R."/>
            <person name="Klenk H.-P."/>
            <person name="Gunsalus R.P."/>
            <person name="Fritz H.-J."/>
            <person name="Gottschalk G."/>
        </authorList>
    </citation>
    <scope>NUCLEOTIDE SEQUENCE [LARGE SCALE GENOMIC DNA]</scope>
    <source>
        <strain>ATCC BAA-159 / DSM 3647 / Goe1 / Go1 / JCM 11833 / OCM 88</strain>
    </source>
</reference>
<proteinExistence type="inferred from homology"/>
<comment type="function">
    <text evidence="1">Catalyzes the first step in hexosamine metabolism, converting fructose-6P into glucosamine-6P using glutamine as a nitrogen source.</text>
</comment>
<comment type="catalytic activity">
    <reaction evidence="1">
        <text>D-fructose 6-phosphate + L-glutamine = D-glucosamine 6-phosphate + L-glutamate</text>
        <dbReference type="Rhea" id="RHEA:13237"/>
        <dbReference type="ChEBI" id="CHEBI:29985"/>
        <dbReference type="ChEBI" id="CHEBI:58359"/>
        <dbReference type="ChEBI" id="CHEBI:58725"/>
        <dbReference type="ChEBI" id="CHEBI:61527"/>
        <dbReference type="EC" id="2.6.1.16"/>
    </reaction>
</comment>
<comment type="subunit">
    <text evidence="1">Homodimer.</text>
</comment>
<comment type="subcellular location">
    <subcellularLocation>
        <location evidence="1">Cytoplasm</location>
    </subcellularLocation>
</comment>
<accession>Q8Q038</accession>